<name>U77B2_CROXC</name>
<protein>
    <recommendedName>
        <fullName evidence="8">Myricetin 3-O-rhamnosyltransferase UGT77B2</fullName>
        <ecNumber evidence="4">2.4.1.-</ecNumber>
    </recommendedName>
    <alternativeName>
        <fullName evidence="7">UDP-glucosyltransferase 1</fullName>
        <shortName evidence="7">CcUGT1</shortName>
    </alternativeName>
</protein>
<keyword id="KW-0328">Glycosyltransferase</keyword>
<keyword id="KW-0808">Transferase</keyword>
<evidence type="ECO:0000250" key="1">
    <source>
        <dbReference type="UniProtKB" id="A0A0A1HA03"/>
    </source>
</evidence>
<evidence type="ECO:0000250" key="2">
    <source>
        <dbReference type="UniProtKB" id="P51094"/>
    </source>
</evidence>
<evidence type="ECO:0000250" key="3">
    <source>
        <dbReference type="UniProtKB" id="Q9LNE6"/>
    </source>
</evidence>
<evidence type="ECO:0000269" key="4">
    <source>
    </source>
</evidence>
<evidence type="ECO:0000269" key="5">
    <source>
    </source>
</evidence>
<evidence type="ECO:0000303" key="6">
    <source>
    </source>
</evidence>
<evidence type="ECO:0000303" key="7">
    <source>
    </source>
</evidence>
<evidence type="ECO:0000305" key="8"/>
<sequence length="456" mass="48737">MDSASRQHVALIAFPFASHPGNLFAFARALAAAAPDITFSFLTTTFAAATLPPAPPAANLRLCHVADGVPEGGLPPGTTIHGRIGMFLRATPGNFRDGVRAAEEEVGVKVSCVVSDAFLWMTADVAEEIGAQWLPLWTCAPAALLAHVSTDQLRERFGVEKQATAGWADELVDFIPGLSCLRIRDIPDEIVTNWHSDLSILLHRMGNQLTSATAVALNTFDGLDTTIDAALASLFKKTLPIGPLNLLSSPPPLQPGDEKCLSWLDGQEDATVAYVSFGTMVLMPTQSDVSEIAQGLESSGVRFLWSLREEARAGLLPPGFLERTAGRGLVVPWAPQVRVLGHRAVGAFVTHCGWNAVMESVTSGVPMACLPSFADQKTNARMVSAAWGIGEALRGEKVTKEEVVRSMEIVMMGEEGRRMRERIGNLREKAAEAVGPGGSSSENFKSVLEMVRGTAN</sequence>
<proteinExistence type="evidence at protein level"/>
<organism>
    <name type="scientific">Crocosmia x crocosmiiflora</name>
    <name type="common">Montbretia</name>
    <name type="synonym">Crocosmia aurea x Crocosmia pottsii</name>
    <dbReference type="NCBI Taxonomy" id="1053288"/>
    <lineage>
        <taxon>Eukaryota</taxon>
        <taxon>Viridiplantae</taxon>
        <taxon>Streptophyta</taxon>
        <taxon>Embryophyta</taxon>
        <taxon>Tracheophyta</taxon>
        <taxon>Spermatophyta</taxon>
        <taxon>Magnoliopsida</taxon>
        <taxon>Liliopsida</taxon>
        <taxon>Asparagales</taxon>
        <taxon>Iridaceae</taxon>
        <taxon>Crocoideae</taxon>
        <taxon>Freesieae</taxon>
        <taxon>Crocosmia</taxon>
    </lineage>
</organism>
<accession>A0A2Z5CVA1</accession>
<reference key="1">
    <citation type="journal article" date="2018" name="Plant Cell">
        <title>Discovery of UDP-glycosyltransferases and BAHD-acyltransferases involved in the biosynthesis of the antidiabetic plant metabolite montbretin A.</title>
        <authorList>
            <person name="Irmisch S."/>
            <person name="Jo S."/>
            <person name="Roach C.R."/>
            <person name="Jancsik S."/>
            <person name="Man Saint Yuen M."/>
            <person name="Madilao L.L."/>
            <person name="O'Neil-Johnson M."/>
            <person name="Williams R."/>
            <person name="Withers S.G."/>
            <person name="Bohlmann J."/>
        </authorList>
    </citation>
    <scope>NUCLEOTIDE SEQUENCE [MRNA]</scope>
    <scope>FUNCTION</scope>
    <scope>CATALYTIC ACTIVITY</scope>
    <scope>TISSUE SPECIFICITY</scope>
</reference>
<reference key="2">
    <citation type="journal article" date="2019" name="Plant Physiol.">
        <title>Flavonol biosynthesis genes and their use in engineering the plant antidiabetic metabolite montbretin A.</title>
        <authorList>
            <person name="Irmisch S."/>
            <person name="Ruebsam H."/>
            <person name="Jancsik S."/>
            <person name="Man Saint Yuen M."/>
            <person name="Madilao L.L."/>
            <person name="Bohlmann J."/>
        </authorList>
    </citation>
    <scope>FUNCTION</scope>
    <scope>CATALYTIC ACTIVITY</scope>
</reference>
<comment type="function">
    <text evidence="4 5">Rhamnosyltransferase involved in montbretin A (MbA) biosynthesis (PubMed:29967287, PubMed:31004005). Catalyzes the 3-O rhamnosylation of myricetin to produce myricetin 3-O-alpha-L-rhamnoside (MR), a precursor of MbA (PubMed:29967287, PubMed:31004005). MbA is a potent inhibitor of human pancreatic alpha-amylase and is being developed as drug candidate to treat type-2 diabetes (PubMed:29967287, PubMed:31004005). In vitro, is able to transfer UDP-glucose and UDP-xylose with 50-fold less efficiency compared with UDP-rhamnose (PubMed:29967287). In vitro, can use kaempferol or quercetin as substrates, although these two flavonols may not be physiological substrates in vivo (PubMed:29967287).</text>
</comment>
<comment type="catalytic activity">
    <reaction evidence="4 5">
        <text>myricetin + UDP-beta-L-rhamnose = myricetin 3-O-alpha-L-rhamnoside + UDP + H(+)</text>
        <dbReference type="Rhea" id="RHEA:61144"/>
        <dbReference type="ChEBI" id="CHEBI:15378"/>
        <dbReference type="ChEBI" id="CHEBI:58223"/>
        <dbReference type="ChEBI" id="CHEBI:58395"/>
        <dbReference type="ChEBI" id="CHEBI:83836"/>
        <dbReference type="ChEBI" id="CHEBI:144432"/>
    </reaction>
    <physiologicalReaction direction="left-to-right" evidence="4 5">
        <dbReference type="Rhea" id="RHEA:61145"/>
    </physiologicalReaction>
</comment>
<comment type="pathway">
    <text evidence="8">Flavonoid metabolism.</text>
</comment>
<comment type="tissue specificity">
    <text evidence="4">Expressed in young cromes.</text>
</comment>
<comment type="similarity">
    <text evidence="8">Belongs to the UDP-glycosyltransferase family.</text>
</comment>
<feature type="chain" id="PRO_0000448217" description="Myricetin 3-O-rhamnosyltransferase UGT77B2">
    <location>
        <begin position="1"/>
        <end position="456"/>
    </location>
</feature>
<feature type="active site" description="Proton acceptor" evidence="1">
    <location>
        <position position="19"/>
    </location>
</feature>
<feature type="active site" description="Charge relay" evidence="1">
    <location>
        <position position="116"/>
    </location>
</feature>
<feature type="binding site" evidence="2">
    <location>
        <position position="19"/>
    </location>
    <ligand>
        <name>an anthocyanidin</name>
        <dbReference type="ChEBI" id="CHEBI:143576"/>
    </ligand>
</feature>
<feature type="binding site" evidence="2">
    <location>
        <position position="147"/>
    </location>
    <ligand>
        <name>an anthocyanidin</name>
        <dbReference type="ChEBI" id="CHEBI:143576"/>
    </ligand>
</feature>
<feature type="binding site" evidence="3">
    <location>
        <position position="279"/>
    </location>
    <ligand>
        <name>UDP-beta-L-rhamnose</name>
        <dbReference type="ChEBI" id="CHEBI:83836"/>
    </ligand>
</feature>
<feature type="binding site" evidence="3">
    <location>
        <position position="334"/>
    </location>
    <ligand>
        <name>UDP-beta-L-rhamnose</name>
        <dbReference type="ChEBI" id="CHEBI:83836"/>
    </ligand>
</feature>
<feature type="binding site" evidence="3">
    <location>
        <position position="351"/>
    </location>
    <ligand>
        <name>UDP-beta-L-rhamnose</name>
        <dbReference type="ChEBI" id="CHEBI:83836"/>
    </ligand>
</feature>
<feature type="binding site" evidence="3">
    <location>
        <position position="355"/>
    </location>
    <ligand>
        <name>UDP-beta-L-rhamnose</name>
        <dbReference type="ChEBI" id="CHEBI:83836"/>
    </ligand>
</feature>
<feature type="binding site" evidence="3">
    <location>
        <position position="359"/>
    </location>
    <ligand>
        <name>UDP-beta-L-rhamnose</name>
        <dbReference type="ChEBI" id="CHEBI:83836"/>
    </ligand>
</feature>
<feature type="binding site" evidence="2">
    <location>
        <position position="374"/>
    </location>
    <ligand>
        <name>an anthocyanidin</name>
        <dbReference type="ChEBI" id="CHEBI:143576"/>
    </ligand>
</feature>
<gene>
    <name evidence="6" type="primary">UGT77B2</name>
    <name evidence="7" type="synonym">UGT1</name>
</gene>
<dbReference type="EC" id="2.4.1.-" evidence="4"/>
<dbReference type="EMBL" id="MG938542">
    <property type="protein sequence ID" value="AXB26715.1"/>
    <property type="molecule type" value="mRNA"/>
</dbReference>
<dbReference type="SMR" id="A0A2Z5CVA1"/>
<dbReference type="GO" id="GO:0080043">
    <property type="term" value="F:quercetin 3-O-glucosyltransferase activity"/>
    <property type="evidence" value="ECO:0007669"/>
    <property type="project" value="TreeGrafter"/>
</dbReference>
<dbReference type="GO" id="GO:0080044">
    <property type="term" value="F:quercetin 7-O-glucosyltransferase activity"/>
    <property type="evidence" value="ECO:0007669"/>
    <property type="project" value="TreeGrafter"/>
</dbReference>
<dbReference type="CDD" id="cd03784">
    <property type="entry name" value="GT1_Gtf-like"/>
    <property type="match status" value="1"/>
</dbReference>
<dbReference type="FunFam" id="3.40.50.2000:FF:000060">
    <property type="entry name" value="Glycosyltransferase"/>
    <property type="match status" value="1"/>
</dbReference>
<dbReference type="Gene3D" id="3.40.50.2000">
    <property type="entry name" value="Glycogen Phosphorylase B"/>
    <property type="match status" value="2"/>
</dbReference>
<dbReference type="InterPro" id="IPR002213">
    <property type="entry name" value="UDP_glucos_trans"/>
</dbReference>
<dbReference type="InterPro" id="IPR035595">
    <property type="entry name" value="UDP_glycos_trans_CS"/>
</dbReference>
<dbReference type="PANTHER" id="PTHR11926:SF1494">
    <property type="entry name" value="FLAVONOL 3-O-GLUCOSYLTRANSFERASE UGT76E12-RELATED"/>
    <property type="match status" value="1"/>
</dbReference>
<dbReference type="PANTHER" id="PTHR11926">
    <property type="entry name" value="GLUCOSYL/GLUCURONOSYL TRANSFERASES"/>
    <property type="match status" value="1"/>
</dbReference>
<dbReference type="Pfam" id="PF00201">
    <property type="entry name" value="UDPGT"/>
    <property type="match status" value="1"/>
</dbReference>
<dbReference type="SUPFAM" id="SSF53756">
    <property type="entry name" value="UDP-Glycosyltransferase/glycogen phosphorylase"/>
    <property type="match status" value="1"/>
</dbReference>
<dbReference type="PROSITE" id="PS00375">
    <property type="entry name" value="UDPGT"/>
    <property type="match status" value="1"/>
</dbReference>